<accession>Q00517</accession>
<name>GSPJ_PSEAE</name>
<comment type="function">
    <text evidence="4 5 6 8">Component of the type II secretion system required for the energy-dependent secretion of extracellular factors such as proteases and toxins from the periplasm (PubMed:9282737). Part of the pseudopilus tip complex that is critical for the recognition and binding of secretion substrates (PubMed:19828448, PubMed:30346996). Type II pseudopilus confers increased bacterial adhesive capabilities (PubMed:12700254).</text>
</comment>
<comment type="subunit">
    <text evidence="5 6 8">Type II secretion is composed of four main components: the outer membrane complex, the inner membrane complex, the cytoplasmic secretion ATPase and the periplasm-spanning pseudopilus. Forms the tip of the type II pseudopilus by interacting with XcpV, XcpU and XcpX (PubMed:19828448, PubMed:30346996). Interacts with core component XcpT (PubMed:9282737).</text>
</comment>
<comment type="subcellular location">
    <subcellularLocation>
        <location evidence="7">Cell inner membrane</location>
        <topology evidence="1">Single-pass membrane protein</topology>
    </subcellularLocation>
</comment>
<comment type="PTM">
    <text evidence="7">Cleaved by prepilin peptidase.</text>
</comment>
<comment type="PTM">
    <text evidence="7">Methylated by prepilin peptidase at the amino group of the N-terminal phenylalanine once the leader sequence is cleaved by prepilin peptidase.</text>
</comment>
<comment type="disruption phenotype">
    <text evidence="6">Deletion mutant results in a non-functional T2SS system.</text>
</comment>
<comment type="similarity">
    <text evidence="9">Belongs to the GSP J family.</text>
</comment>
<reference key="1">
    <citation type="journal article" date="1992" name="Mol. Microbiol.">
        <title>Protein secretion in Pseudomonas aeruginosa: characterization of seven xcp genes and processing of secretory apparatus components by prepilin peptidase.</title>
        <authorList>
            <person name="Bally M."/>
            <person name="Filloux A."/>
            <person name="Akrim M."/>
            <person name="Ball G."/>
            <person name="Lazdunski A."/>
            <person name="Tommassen J."/>
        </authorList>
    </citation>
    <scope>NUCLEOTIDE SEQUENCE [GENOMIC DNA]</scope>
    <source>
        <strain>ATCC 15692 / DSM 22644 / CIP 104116 / JCM 14847 / LMG 12228 / 1C / PRS 101 / PAO1</strain>
    </source>
</reference>
<reference key="2">
    <citation type="journal article" date="1992" name="Proc. Natl. Acad. Sci. U.S.A.">
        <title>Components of the protein-excretion apparatus of Pseudomonas aeruginosa are processed by the type IV prepilin peptidase.</title>
        <authorList>
            <person name="Nunn D.N."/>
            <person name="Lory S."/>
        </authorList>
    </citation>
    <scope>NUCLEOTIDE SEQUENCE [GENOMIC DNA]</scope>
</reference>
<reference key="3">
    <citation type="journal article" date="2000" name="Nature">
        <title>Complete genome sequence of Pseudomonas aeruginosa PAO1, an opportunistic pathogen.</title>
        <authorList>
            <person name="Stover C.K."/>
            <person name="Pham X.-Q.T."/>
            <person name="Erwin A.L."/>
            <person name="Mizoguchi S.D."/>
            <person name="Warrener P."/>
            <person name="Hickey M.J."/>
            <person name="Brinkman F.S.L."/>
            <person name="Hufnagle W.O."/>
            <person name="Kowalik D.J."/>
            <person name="Lagrou M."/>
            <person name="Garber R.L."/>
            <person name="Goltry L."/>
            <person name="Tolentino E."/>
            <person name="Westbrock-Wadman S."/>
            <person name="Yuan Y."/>
            <person name="Brody L.L."/>
            <person name="Coulter S.N."/>
            <person name="Folger K.R."/>
            <person name="Kas A."/>
            <person name="Larbig K."/>
            <person name="Lim R.M."/>
            <person name="Smith K.A."/>
            <person name="Spencer D.H."/>
            <person name="Wong G.K.-S."/>
            <person name="Wu Z."/>
            <person name="Paulsen I.T."/>
            <person name="Reizer J."/>
            <person name="Saier M.H. Jr."/>
            <person name="Hancock R.E.W."/>
            <person name="Lory S."/>
            <person name="Olson M.V."/>
        </authorList>
    </citation>
    <scope>NUCLEOTIDE SEQUENCE [LARGE SCALE GENOMIC DNA]</scope>
    <source>
        <strain>ATCC 15692 / DSM 22644 / CIP 104116 / JCM 14847 / LMG 12228 / 1C / PRS 101 / PAO1</strain>
    </source>
</reference>
<reference key="4">
    <citation type="journal article" date="1993" name="J. Bacteriol.">
        <title>Cleavage, methylation, and localization of the Pseudomonas aeruginosa export proteins XcpT, -U, -V, and -W.</title>
        <authorList>
            <person name="Nunn D.N."/>
            <person name="Lory S."/>
        </authorList>
    </citation>
    <scope>SUBCELLULAR LOCATION</scope>
    <scope>CLEAVAGE</scope>
    <scope>METHYLATION AT PHE-7</scope>
    <source>
        <strain>PAK</strain>
    </source>
</reference>
<reference key="5">
    <citation type="journal article" date="1997" name="Mol. Microbiol.">
        <title>Interactions of the components of the general secretion pathway: role of Pseudomonas aeruginosa type IV pilin subunits in complex formation and extracellular protein secretion.</title>
        <authorList>
            <person name="Lu H.M."/>
            <person name="Motley S.T."/>
            <person name="Lory S."/>
        </authorList>
    </citation>
    <scope>FUNCTION</scope>
    <scope>INTERACTION WITH XCPT</scope>
</reference>
<reference key="6">
    <citation type="journal article" date="2003" name="J. Bacteriol.">
        <title>Type II protein secretion in Pseudomonas aeruginosa: the pseudopilus is a multifibrillar and adhesive structure.</title>
        <authorList>
            <person name="Durand E."/>
            <person name="Bernadac A."/>
            <person name="Ball G."/>
            <person name="Lazdunski A."/>
            <person name="Sturgis J.N."/>
            <person name="Filloux A."/>
        </authorList>
    </citation>
    <scope>FUNCTION</scope>
    <source>
        <strain>ATCC 15692 / DSM 22644 / CIP 104116 / JCM 14847 / LMG 12228 / 1C / PRS 101 / PAO1</strain>
    </source>
</reference>
<reference key="7">
    <citation type="journal article" date="2009" name="J. Biol. Chem.">
        <title>The XcpV/GspI pseudopilin has a central role in the assembly of a quaternary complex within the T2SS pseudopilus.</title>
        <authorList>
            <person name="Douzi B."/>
            <person name="Durand E."/>
            <person name="Bernard C."/>
            <person name="Alphonse S."/>
            <person name="Cambillau C."/>
            <person name="Filloux A."/>
            <person name="Tegoni M."/>
            <person name="Voulhoux R."/>
        </authorList>
    </citation>
    <scope>FUNCTION</scope>
    <scope>INTERACTION WITH XCPU; XCPV AMD XCPX</scope>
</reference>
<reference key="8">
    <citation type="journal article" date="2011" name="Acta Crystallogr. D">
        <title>Structure of the minor pseudopilin XcpW from the Pseudomonas aeruginosa type II secretion system.</title>
        <authorList>
            <person name="Franz L.P."/>
            <person name="Douzi B."/>
            <person name="Durand E."/>
            <person name="Dyer D.H."/>
            <person name="Voulhoux R."/>
            <person name="Forest K.T."/>
        </authorList>
    </citation>
    <scope>X-RAY CRYSTALLOGRAPHY (1.85 ANGSTROMS) OF 28-237</scope>
</reference>
<reference key="9">
    <citation type="journal article" date="2018" name="PLoS Pathog.">
        <title>Structure-guided disruption of the pseudopilus tip complex inhibits the Type II secretion in Pseudomonas aeruginosa.</title>
        <authorList>
            <person name="Zhang Y."/>
            <person name="Faucher F."/>
            <person name="Zhang W."/>
            <person name="Wang S."/>
            <person name="Neville N."/>
            <person name="Poole K."/>
            <person name="Zheng J."/>
            <person name="Jia Z."/>
        </authorList>
    </citation>
    <scope>X-RAY CRYSTALLOGRAPHY (2.00 ANGSTROMS) OF 28-237</scope>
    <scope>FUNCTION</scope>
    <scope>INTERACTION WITH XCPU</scope>
    <scope>DISRUPTION PHENOTYPE</scope>
</reference>
<feature type="propeptide" id="PRO_0000024256" description="Leader sequence" evidence="2 7">
    <location>
        <begin position="1"/>
        <end position="6"/>
    </location>
</feature>
<feature type="chain" id="PRO_0000024257" description="Type II secretion system protein J">
    <location>
        <begin position="7"/>
        <end position="237"/>
    </location>
</feature>
<feature type="transmembrane region" description="Helical" evidence="1">
    <location>
        <begin position="7"/>
        <end position="29"/>
    </location>
</feature>
<feature type="region of interest" description="Disordered" evidence="3">
    <location>
        <begin position="203"/>
        <end position="237"/>
    </location>
</feature>
<feature type="compositionally biased region" description="Gly residues" evidence="3">
    <location>
        <begin position="212"/>
        <end position="224"/>
    </location>
</feature>
<feature type="compositionally biased region" description="Pro residues" evidence="3">
    <location>
        <begin position="226"/>
        <end position="237"/>
    </location>
</feature>
<feature type="modified residue" description="N-methylphenylalanine" evidence="2">
    <location>
        <position position="7"/>
    </location>
</feature>
<feature type="sequence conflict" description="In Ref. 2; AAA25949." evidence="9" ref="2">
    <original>F</original>
    <variation>L</variation>
    <location>
        <position position="92"/>
    </location>
</feature>
<feature type="helix" evidence="10">
    <location>
        <begin position="42"/>
        <end position="62"/>
    </location>
</feature>
<feature type="strand" evidence="10">
    <location>
        <begin position="64"/>
        <end position="66"/>
    </location>
</feature>
<feature type="strand" evidence="10">
    <location>
        <begin position="79"/>
        <end position="84"/>
    </location>
</feature>
<feature type="helix" evidence="10">
    <location>
        <begin position="85"/>
        <end position="87"/>
    </location>
</feature>
<feature type="strand" evidence="10">
    <location>
        <begin position="89"/>
        <end position="94"/>
    </location>
</feature>
<feature type="strand" evidence="10">
    <location>
        <begin position="109"/>
        <end position="116"/>
    </location>
</feature>
<feature type="strand" evidence="10">
    <location>
        <begin position="119"/>
        <end position="126"/>
    </location>
</feature>
<feature type="strand" evidence="11">
    <location>
        <begin position="128"/>
        <end position="130"/>
    </location>
</feature>
<feature type="helix" evidence="10">
    <location>
        <begin position="131"/>
        <end position="133"/>
    </location>
</feature>
<feature type="strand" evidence="10">
    <location>
        <begin position="137"/>
        <end position="143"/>
    </location>
</feature>
<feature type="strand" evidence="10">
    <location>
        <begin position="145"/>
        <end position="153"/>
    </location>
</feature>
<feature type="strand" evidence="10">
    <location>
        <begin position="159"/>
        <end position="164"/>
    </location>
</feature>
<feature type="helix" evidence="10">
    <location>
        <begin position="170"/>
        <end position="175"/>
    </location>
</feature>
<feature type="strand" evidence="10">
    <location>
        <begin position="179"/>
        <end position="187"/>
    </location>
</feature>
<feature type="turn" evidence="10">
    <location>
        <begin position="188"/>
        <end position="190"/>
    </location>
</feature>
<feature type="strand" evidence="10">
    <location>
        <begin position="191"/>
        <end position="198"/>
    </location>
</feature>
<sequence length="237" mass="27131">MRLQRGFTLLELLIAIAIFALLALATYRMFDSVMQTDQATRVQEQRMRELVRAMGALERDLTQAVERPVRDELGDNRGAFLSEGENDQIVEFTRGGWRNPLGQARSRLQRVRWSLSGETLERRYWLVLDRAQDSKPRVQQVLDGVTALSWRFLDKEHNWQGHWPTDEGSEEERLESLPLAVEMTLEHRHYGKLVRVWRLLDPPLKQDQPQGQPGGENGENGEGGVPQPPEGMPGAPE</sequence>
<organism>
    <name type="scientific">Pseudomonas aeruginosa (strain ATCC 15692 / DSM 22644 / CIP 104116 / JCM 14847 / LMG 12228 / 1C / PRS 101 / PAO1)</name>
    <dbReference type="NCBI Taxonomy" id="208964"/>
    <lineage>
        <taxon>Bacteria</taxon>
        <taxon>Pseudomonadati</taxon>
        <taxon>Pseudomonadota</taxon>
        <taxon>Gammaproteobacteria</taxon>
        <taxon>Pseudomonadales</taxon>
        <taxon>Pseudomonadaceae</taxon>
        <taxon>Pseudomonas</taxon>
    </lineage>
</organism>
<gene>
    <name type="primary">xcpW</name>
    <name type="synonym">pddD</name>
    <name type="ordered locus">PA3098</name>
</gene>
<evidence type="ECO:0000255" key="1"/>
<evidence type="ECO:0000255" key="2">
    <source>
        <dbReference type="PROSITE-ProRule" id="PRU01070"/>
    </source>
</evidence>
<evidence type="ECO:0000256" key="3">
    <source>
        <dbReference type="SAM" id="MobiDB-lite"/>
    </source>
</evidence>
<evidence type="ECO:0000269" key="4">
    <source>
    </source>
</evidence>
<evidence type="ECO:0000269" key="5">
    <source>
    </source>
</evidence>
<evidence type="ECO:0000269" key="6">
    <source>
    </source>
</evidence>
<evidence type="ECO:0000269" key="7">
    <source>
    </source>
</evidence>
<evidence type="ECO:0000269" key="8">
    <source>
    </source>
</evidence>
<evidence type="ECO:0000305" key="9"/>
<evidence type="ECO:0007829" key="10">
    <source>
        <dbReference type="PDB" id="3NJE"/>
    </source>
</evidence>
<evidence type="ECO:0007829" key="11">
    <source>
        <dbReference type="PDB" id="5VTM"/>
    </source>
</evidence>
<proteinExistence type="evidence at protein level"/>
<keyword id="KW-0002">3D-structure</keyword>
<keyword id="KW-0997">Cell inner membrane</keyword>
<keyword id="KW-1003">Cell membrane</keyword>
<keyword id="KW-0472">Membrane</keyword>
<keyword id="KW-0488">Methylation</keyword>
<keyword id="KW-0653">Protein transport</keyword>
<keyword id="KW-1185">Reference proteome</keyword>
<keyword id="KW-0812">Transmembrane</keyword>
<keyword id="KW-1133">Transmembrane helix</keyword>
<keyword id="KW-0813">Transport</keyword>
<dbReference type="EMBL" id="X62666">
    <property type="protein sequence ID" value="CAA44538.1"/>
    <property type="molecule type" value="Genomic_DNA"/>
</dbReference>
<dbReference type="EMBL" id="M80792">
    <property type="protein sequence ID" value="AAA25949.1"/>
    <property type="molecule type" value="Genomic_DNA"/>
</dbReference>
<dbReference type="EMBL" id="AE004091">
    <property type="protein sequence ID" value="AAG06486.1"/>
    <property type="molecule type" value="Genomic_DNA"/>
</dbReference>
<dbReference type="PIR" id="S25389">
    <property type="entry name" value="SKPSXW"/>
</dbReference>
<dbReference type="RefSeq" id="NP_251788.1">
    <property type="nucleotide sequence ID" value="NC_002516.2"/>
</dbReference>
<dbReference type="RefSeq" id="WP_003110067.1">
    <property type="nucleotide sequence ID" value="NZ_QZGE01000009.1"/>
</dbReference>
<dbReference type="PDB" id="3NJE">
    <property type="method" value="X-ray"/>
    <property type="resolution" value="1.85 A"/>
    <property type="chains" value="A/B=28-237"/>
</dbReference>
<dbReference type="PDB" id="5BW0">
    <property type="method" value="X-ray"/>
    <property type="resolution" value="2.00 A"/>
    <property type="chains" value="A/C/E/G=28-204"/>
</dbReference>
<dbReference type="PDB" id="5VTM">
    <property type="method" value="X-ray"/>
    <property type="resolution" value="2.04 A"/>
    <property type="chains" value="W=44-237"/>
</dbReference>
<dbReference type="PDB" id="6UTU">
    <property type="method" value="X-ray"/>
    <property type="resolution" value="2.85 A"/>
    <property type="chains" value="B/E/H=44-237"/>
</dbReference>
<dbReference type="PDBsum" id="3NJE"/>
<dbReference type="PDBsum" id="5BW0"/>
<dbReference type="PDBsum" id="5VTM"/>
<dbReference type="PDBsum" id="6UTU"/>
<dbReference type="SMR" id="Q00517"/>
<dbReference type="FunCoup" id="Q00517">
    <property type="interactions" value="113"/>
</dbReference>
<dbReference type="STRING" id="208964.PA3098"/>
<dbReference type="PaxDb" id="208964-PA3098"/>
<dbReference type="DNASU" id="882776"/>
<dbReference type="GeneID" id="882776"/>
<dbReference type="KEGG" id="pae:PA3098"/>
<dbReference type="PATRIC" id="fig|208964.12.peg.3250"/>
<dbReference type="PseudoCAP" id="PA3098"/>
<dbReference type="HOGENOM" id="CLU_093850_1_0_6"/>
<dbReference type="InParanoid" id="Q00517"/>
<dbReference type="OrthoDB" id="9794345at2"/>
<dbReference type="PhylomeDB" id="Q00517"/>
<dbReference type="BioCyc" id="PAER208964:G1FZ6-3154-MONOMER"/>
<dbReference type="EvolutionaryTrace" id="Q00517"/>
<dbReference type="Proteomes" id="UP000002438">
    <property type="component" value="Chromosome"/>
</dbReference>
<dbReference type="GO" id="GO:0005886">
    <property type="term" value="C:plasma membrane"/>
    <property type="evidence" value="ECO:0007669"/>
    <property type="project" value="UniProtKB-SubCell"/>
</dbReference>
<dbReference type="GO" id="GO:0015627">
    <property type="term" value="C:type II protein secretion system complex"/>
    <property type="evidence" value="ECO:0000314"/>
    <property type="project" value="PseudoCAP"/>
</dbReference>
<dbReference type="GO" id="GO:0015628">
    <property type="term" value="P:protein secretion by the type II secretion system"/>
    <property type="evidence" value="ECO:0000314"/>
    <property type="project" value="PseudoCAP"/>
</dbReference>
<dbReference type="Gene3D" id="3.10.610.10">
    <property type="entry name" value="GSPII I/J protein-like"/>
    <property type="match status" value="1"/>
</dbReference>
<dbReference type="Gene3D" id="2.10.70.20">
    <property type="entry name" value="gspk-gspi-gspj complex like domains"/>
    <property type="match status" value="1"/>
</dbReference>
<dbReference type="InterPro" id="IPR012902">
    <property type="entry name" value="N_methyl_site"/>
</dbReference>
<dbReference type="InterPro" id="IPR045584">
    <property type="entry name" value="Pilin-like"/>
</dbReference>
<dbReference type="InterPro" id="IPR010055">
    <property type="entry name" value="T2SS_protein-GspJ"/>
</dbReference>
<dbReference type="InterPro" id="IPR051621">
    <property type="entry name" value="T2SS_protein_J"/>
</dbReference>
<dbReference type="NCBIfam" id="TIGR01711">
    <property type="entry name" value="gspJ"/>
    <property type="match status" value="1"/>
</dbReference>
<dbReference type="NCBIfam" id="TIGR02532">
    <property type="entry name" value="IV_pilin_GFxxxE"/>
    <property type="match status" value="1"/>
</dbReference>
<dbReference type="PANTHER" id="PTHR39583:SF2">
    <property type="entry name" value="TYPE II SECRETION SYSTEM PROTEIN J"/>
    <property type="match status" value="1"/>
</dbReference>
<dbReference type="PANTHER" id="PTHR39583">
    <property type="entry name" value="TYPE II SECRETION SYSTEM PROTEIN J-RELATED"/>
    <property type="match status" value="1"/>
</dbReference>
<dbReference type="Pfam" id="PF07963">
    <property type="entry name" value="N_methyl"/>
    <property type="match status" value="1"/>
</dbReference>
<dbReference type="Pfam" id="PF11612">
    <property type="entry name" value="T2SSJ"/>
    <property type="match status" value="1"/>
</dbReference>
<dbReference type="SUPFAM" id="SSF54523">
    <property type="entry name" value="Pili subunits"/>
    <property type="match status" value="2"/>
</dbReference>
<dbReference type="PROSITE" id="PS00409">
    <property type="entry name" value="PROKAR_NTER_METHYL"/>
    <property type="match status" value="1"/>
</dbReference>
<protein>
    <recommendedName>
        <fullName>Type II secretion system protein J</fullName>
        <shortName>T2SS protein J</shortName>
    </recommendedName>
    <alternativeName>
        <fullName>General secretion pathway protein J</fullName>
    </alternativeName>
    <alternativeName>
        <fullName>PilD-dependent protein PddD</fullName>
    </alternativeName>
</protein>